<sequence>MNASNPCRRFPRSARVRTRAQYTIVFDTARRTSDPLLSLHWRTGDTPPRLGMAVSRKVDTRAVGRNRIKRVLRDAMRHLLPELAGGDYVIVARSAAAKATNPQIRDAFLRLLHRAGALPLPAAAGTMPPARTVHPSSLSPTEPEL</sequence>
<dbReference type="EC" id="3.1.26.5" evidence="1"/>
<dbReference type="EMBL" id="AE008923">
    <property type="protein sequence ID" value="AAM39203.1"/>
    <property type="molecule type" value="Genomic_DNA"/>
</dbReference>
<dbReference type="RefSeq" id="WP_011052928.1">
    <property type="nucleotide sequence ID" value="NC_003919.1"/>
</dbReference>
<dbReference type="SMR" id="Q8PEH6"/>
<dbReference type="GeneID" id="66913344"/>
<dbReference type="KEGG" id="xac:XAC4373"/>
<dbReference type="eggNOG" id="COG0594">
    <property type="taxonomic scope" value="Bacteria"/>
</dbReference>
<dbReference type="HOGENOM" id="CLU_117179_3_0_6"/>
<dbReference type="Proteomes" id="UP000000576">
    <property type="component" value="Chromosome"/>
</dbReference>
<dbReference type="GO" id="GO:0030677">
    <property type="term" value="C:ribonuclease P complex"/>
    <property type="evidence" value="ECO:0007669"/>
    <property type="project" value="TreeGrafter"/>
</dbReference>
<dbReference type="GO" id="GO:0042781">
    <property type="term" value="F:3'-tRNA processing endoribonuclease activity"/>
    <property type="evidence" value="ECO:0007669"/>
    <property type="project" value="TreeGrafter"/>
</dbReference>
<dbReference type="GO" id="GO:0004526">
    <property type="term" value="F:ribonuclease P activity"/>
    <property type="evidence" value="ECO:0007669"/>
    <property type="project" value="UniProtKB-UniRule"/>
</dbReference>
<dbReference type="GO" id="GO:0000049">
    <property type="term" value="F:tRNA binding"/>
    <property type="evidence" value="ECO:0007669"/>
    <property type="project" value="UniProtKB-UniRule"/>
</dbReference>
<dbReference type="GO" id="GO:0001682">
    <property type="term" value="P:tRNA 5'-leader removal"/>
    <property type="evidence" value="ECO:0007669"/>
    <property type="project" value="UniProtKB-UniRule"/>
</dbReference>
<dbReference type="FunFam" id="3.30.230.10:FF:000082">
    <property type="entry name" value="Ribonuclease P protein component"/>
    <property type="match status" value="1"/>
</dbReference>
<dbReference type="Gene3D" id="3.30.230.10">
    <property type="match status" value="1"/>
</dbReference>
<dbReference type="HAMAP" id="MF_00227">
    <property type="entry name" value="RNase_P"/>
    <property type="match status" value="1"/>
</dbReference>
<dbReference type="InterPro" id="IPR020568">
    <property type="entry name" value="Ribosomal_Su5_D2-typ_SF"/>
</dbReference>
<dbReference type="InterPro" id="IPR014721">
    <property type="entry name" value="Ribsml_uS5_D2-typ_fold_subgr"/>
</dbReference>
<dbReference type="InterPro" id="IPR000100">
    <property type="entry name" value="RNase_P"/>
</dbReference>
<dbReference type="InterPro" id="IPR020539">
    <property type="entry name" value="RNase_P_CS"/>
</dbReference>
<dbReference type="NCBIfam" id="TIGR00188">
    <property type="entry name" value="rnpA"/>
    <property type="match status" value="1"/>
</dbReference>
<dbReference type="PANTHER" id="PTHR33992">
    <property type="entry name" value="RIBONUCLEASE P PROTEIN COMPONENT"/>
    <property type="match status" value="1"/>
</dbReference>
<dbReference type="PANTHER" id="PTHR33992:SF1">
    <property type="entry name" value="RIBONUCLEASE P PROTEIN COMPONENT"/>
    <property type="match status" value="1"/>
</dbReference>
<dbReference type="Pfam" id="PF00825">
    <property type="entry name" value="Ribonuclease_P"/>
    <property type="match status" value="1"/>
</dbReference>
<dbReference type="SUPFAM" id="SSF54211">
    <property type="entry name" value="Ribosomal protein S5 domain 2-like"/>
    <property type="match status" value="1"/>
</dbReference>
<dbReference type="PROSITE" id="PS00648">
    <property type="entry name" value="RIBONUCLEASE_P"/>
    <property type="match status" value="1"/>
</dbReference>
<keyword id="KW-0255">Endonuclease</keyword>
<keyword id="KW-0378">Hydrolase</keyword>
<keyword id="KW-0540">Nuclease</keyword>
<keyword id="KW-0694">RNA-binding</keyword>
<keyword id="KW-0819">tRNA processing</keyword>
<accession>Q8PEH6</accession>
<reference key="1">
    <citation type="journal article" date="2002" name="Nature">
        <title>Comparison of the genomes of two Xanthomonas pathogens with differing host specificities.</title>
        <authorList>
            <person name="da Silva A.C.R."/>
            <person name="Ferro J.A."/>
            <person name="Reinach F.C."/>
            <person name="Farah C.S."/>
            <person name="Furlan L.R."/>
            <person name="Quaggio R.B."/>
            <person name="Monteiro-Vitorello C.B."/>
            <person name="Van Sluys M.A."/>
            <person name="Almeida N.F. Jr."/>
            <person name="Alves L.M.C."/>
            <person name="do Amaral A.M."/>
            <person name="Bertolini M.C."/>
            <person name="Camargo L.E.A."/>
            <person name="Camarotte G."/>
            <person name="Cannavan F."/>
            <person name="Cardozo J."/>
            <person name="Chambergo F."/>
            <person name="Ciapina L.P."/>
            <person name="Cicarelli R.M.B."/>
            <person name="Coutinho L.L."/>
            <person name="Cursino-Santos J.R."/>
            <person name="El-Dorry H."/>
            <person name="Faria J.B."/>
            <person name="Ferreira A.J.S."/>
            <person name="Ferreira R.C.C."/>
            <person name="Ferro M.I.T."/>
            <person name="Formighieri E.F."/>
            <person name="Franco M.C."/>
            <person name="Greggio C.C."/>
            <person name="Gruber A."/>
            <person name="Katsuyama A.M."/>
            <person name="Kishi L.T."/>
            <person name="Leite R.P."/>
            <person name="Lemos E.G.M."/>
            <person name="Lemos M.V.F."/>
            <person name="Locali E.C."/>
            <person name="Machado M.A."/>
            <person name="Madeira A.M.B.N."/>
            <person name="Martinez-Rossi N.M."/>
            <person name="Martins E.C."/>
            <person name="Meidanis J."/>
            <person name="Menck C.F.M."/>
            <person name="Miyaki C.Y."/>
            <person name="Moon D.H."/>
            <person name="Moreira L.M."/>
            <person name="Novo M.T.M."/>
            <person name="Okura V.K."/>
            <person name="Oliveira M.C."/>
            <person name="Oliveira V.R."/>
            <person name="Pereira H.A."/>
            <person name="Rossi A."/>
            <person name="Sena J.A.D."/>
            <person name="Silva C."/>
            <person name="de Souza R.F."/>
            <person name="Spinola L.A.F."/>
            <person name="Takita M.A."/>
            <person name="Tamura R.E."/>
            <person name="Teixeira E.C."/>
            <person name="Tezza R.I.D."/>
            <person name="Trindade dos Santos M."/>
            <person name="Truffi D."/>
            <person name="Tsai S.M."/>
            <person name="White F.F."/>
            <person name="Setubal J.C."/>
            <person name="Kitajima J.P."/>
        </authorList>
    </citation>
    <scope>NUCLEOTIDE SEQUENCE [LARGE SCALE GENOMIC DNA]</scope>
    <source>
        <strain>306</strain>
    </source>
</reference>
<evidence type="ECO:0000255" key="1">
    <source>
        <dbReference type="HAMAP-Rule" id="MF_00227"/>
    </source>
</evidence>
<evidence type="ECO:0000256" key="2">
    <source>
        <dbReference type="SAM" id="MobiDB-lite"/>
    </source>
</evidence>
<comment type="function">
    <text evidence="1">RNaseP catalyzes the removal of the 5'-leader sequence from pre-tRNA to produce the mature 5'-terminus. It can also cleave other RNA substrates such as 4.5S RNA. The protein component plays an auxiliary but essential role in vivo by binding to the 5'-leader sequence and broadening the substrate specificity of the ribozyme.</text>
</comment>
<comment type="catalytic activity">
    <reaction evidence="1">
        <text>Endonucleolytic cleavage of RNA, removing 5'-extranucleotides from tRNA precursor.</text>
        <dbReference type="EC" id="3.1.26.5"/>
    </reaction>
</comment>
<comment type="subunit">
    <text evidence="1">Consists of a catalytic RNA component (M1 or rnpB) and a protein subunit.</text>
</comment>
<comment type="similarity">
    <text evidence="1">Belongs to the RnpA family.</text>
</comment>
<gene>
    <name evidence="1" type="primary">rnpA</name>
    <name type="ordered locus">XAC4373</name>
</gene>
<feature type="chain" id="PRO_0000198567" description="Ribonuclease P protein component">
    <location>
        <begin position="1"/>
        <end position="145"/>
    </location>
</feature>
<feature type="region of interest" description="Disordered" evidence="2">
    <location>
        <begin position="121"/>
        <end position="145"/>
    </location>
</feature>
<feature type="compositionally biased region" description="Polar residues" evidence="2">
    <location>
        <begin position="134"/>
        <end position="145"/>
    </location>
</feature>
<proteinExistence type="inferred from homology"/>
<protein>
    <recommendedName>
        <fullName evidence="1">Ribonuclease P protein component</fullName>
        <shortName evidence="1">RNase P protein</shortName>
        <shortName evidence="1">RNaseP protein</shortName>
        <ecNumber evidence="1">3.1.26.5</ecNumber>
    </recommendedName>
    <alternativeName>
        <fullName evidence="1">Protein C5</fullName>
    </alternativeName>
</protein>
<organism>
    <name type="scientific">Xanthomonas axonopodis pv. citri (strain 306)</name>
    <dbReference type="NCBI Taxonomy" id="190486"/>
    <lineage>
        <taxon>Bacteria</taxon>
        <taxon>Pseudomonadati</taxon>
        <taxon>Pseudomonadota</taxon>
        <taxon>Gammaproteobacteria</taxon>
        <taxon>Lysobacterales</taxon>
        <taxon>Lysobacteraceae</taxon>
        <taxon>Xanthomonas</taxon>
    </lineage>
</organism>
<name>RNPA_XANAC</name>